<evidence type="ECO:0000250" key="1"/>
<evidence type="ECO:0000256" key="2">
    <source>
        <dbReference type="SAM" id="MobiDB-lite"/>
    </source>
</evidence>
<evidence type="ECO:0000269" key="3">
    <source>
    </source>
</evidence>
<evidence type="ECO:0000269" key="4">
    <source>
    </source>
</evidence>
<evidence type="ECO:0000269" key="5">
    <source>
    </source>
</evidence>
<evidence type="ECO:0000305" key="6"/>
<evidence type="ECO:0007829" key="7">
    <source>
        <dbReference type="PDB" id="4FRF"/>
    </source>
</evidence>
<feature type="chain" id="PRO_0000341576" description="Inositol polyphosphate multikinase alpha">
    <location>
        <begin position="1"/>
        <end position="286"/>
    </location>
</feature>
<feature type="region of interest" description="Disordered" evidence="2">
    <location>
        <begin position="1"/>
        <end position="22"/>
    </location>
</feature>
<feature type="mutagenesis site" description="Loss of kinase activity." evidence="3">
    <original>D</original>
    <variation>A</variation>
    <location>
        <position position="98"/>
    </location>
</feature>
<feature type="sequence conflict" description="In Ref. 6; AAM64773." evidence="6" ref="6">
    <original>T</original>
    <variation>S</variation>
    <location>
        <position position="92"/>
    </location>
</feature>
<feature type="sequence conflict" description="In Ref. 1; AAN63057 and 2; CAB96043." evidence="6" ref="1 2">
    <original>D</original>
    <variation>Y</variation>
    <location>
        <position position="159"/>
    </location>
</feature>
<feature type="sequence conflict" description="In Ref. 1; AAN63057 and 2; CAB96043." evidence="6" ref="1 2">
    <original>F</original>
    <variation>L</variation>
    <location>
        <position position="248"/>
    </location>
</feature>
<feature type="helix" evidence="7">
    <location>
        <begin position="43"/>
        <end position="52"/>
    </location>
</feature>
<feature type="helix" evidence="7">
    <location>
        <begin position="58"/>
        <end position="61"/>
    </location>
</feature>
<feature type="helix" evidence="7">
    <location>
        <begin position="87"/>
        <end position="90"/>
    </location>
</feature>
<feature type="strand" evidence="7">
    <location>
        <begin position="92"/>
        <end position="101"/>
    </location>
</feature>
<feature type="strand" evidence="7">
    <location>
        <begin position="103"/>
        <end position="105"/>
    </location>
</feature>
<feature type="helix" evidence="7">
    <location>
        <begin position="112"/>
        <end position="122"/>
    </location>
</feature>
<feature type="helix" evidence="7">
    <location>
        <begin position="126"/>
        <end position="129"/>
    </location>
</feature>
<feature type="strand" evidence="7">
    <location>
        <begin position="130"/>
        <end position="141"/>
    </location>
</feature>
<feature type="turn" evidence="7">
    <location>
        <begin position="142"/>
        <end position="145"/>
    </location>
</feature>
<feature type="strand" evidence="7">
    <location>
        <begin position="146"/>
        <end position="148"/>
    </location>
</feature>
<feature type="helix" evidence="7">
    <location>
        <begin position="152"/>
        <end position="156"/>
    </location>
</feature>
<feature type="helix" evidence="7">
    <location>
        <begin position="160"/>
        <end position="169"/>
    </location>
</feature>
<feature type="helix" evidence="7">
    <location>
        <begin position="188"/>
        <end position="191"/>
    </location>
</feature>
<feature type="helix" evidence="7">
    <location>
        <begin position="198"/>
        <end position="211"/>
    </location>
</feature>
<feature type="strand" evidence="7">
    <location>
        <begin position="214"/>
        <end position="216"/>
    </location>
</feature>
<feature type="strand" evidence="7">
    <location>
        <begin position="219"/>
        <end position="227"/>
    </location>
</feature>
<feature type="strand" evidence="7">
    <location>
        <begin position="242"/>
        <end position="246"/>
    </location>
</feature>
<feature type="helix" evidence="7">
    <location>
        <begin position="260"/>
        <end position="276"/>
    </location>
</feature>
<proteinExistence type="evidence at protein level"/>
<gene>
    <name type="primary">IPK2a</name>
    <name type="synonym">IP3K</name>
    <name type="synonym">IPMK</name>
    <name type="ordered locus">At5g07370</name>
    <name type="ORF">T2I1.80</name>
</gene>
<keyword id="KW-0002">3D-structure</keyword>
<keyword id="KW-0067">ATP-binding</keyword>
<keyword id="KW-1003">Cell membrane</keyword>
<keyword id="KW-0418">Kinase</keyword>
<keyword id="KW-0472">Membrane</keyword>
<keyword id="KW-0547">Nucleotide-binding</keyword>
<keyword id="KW-0539">Nucleus</keyword>
<keyword id="KW-1185">Reference proteome</keyword>
<keyword id="KW-0808">Transferase</keyword>
<protein>
    <recommendedName>
        <fullName>Inositol polyphosphate multikinase alpha</fullName>
        <ecNumber>2.7.1.140</ecNumber>
        <ecNumber>2.7.1.151</ecNumber>
    </recommendedName>
    <alternativeName>
        <fullName>Inositol polyphosphate 6-/3-/5-kinase alpha</fullName>
        <shortName>AtIpk2-alpha</shortName>
        <shortName>AtIpk2alpha</shortName>
    </alternativeName>
</protein>
<comment type="function">
    <text evidence="3 4">Inositol phosphate kinase with a broad substrate specificity. Phosphorylates inositol 1,4,5-trisphosphate (Ins(1,4,5)P3), inositol 1,4,5,6-tetrakisphosphate (Ins(1,4,5,6)P4), inositol 1,3,4,5-tetrakisphosphate (Ins(1,3,4,5)P4), inositol 1,3,4,6-tetrakisphosphate (Ins(1,3,4,6)P4) and inositol 1,2,3,4,6-pentakisphosphate (Ins(1,2,3,4,6)P5) but not inositol 1,4-bisphosphate (Ins(1,4)P2), inositol 1,3,4-trisphosphate (Ins(1,3,4)P3), inositol 1,2,6-trisphosphate (Ins(1,2,6)P3), inositol 3,4,5,6-tetrakisphosphate (Ins(3,4,5,6)P4), inositol 1,3,4,5,6-pentakisphosphate (Ins(1,3,4,5,6)P5), inositol 1,2,4,5,6-pentakisphosphate (Ins(1,2,4,5,6)P5) or inositol hexakisphosphate (InsP6). Regulates pollen and root development probably through the regulation of InsP3-mediated calcium accumulation.</text>
</comment>
<comment type="catalytic activity">
    <reaction>
        <text>1D-myo-inositol 1,4,5-trisphosphate + 2 ATP = 1D-myo-inositol 1,3,4,5,6-pentakisphosphate + 2 ADP + 2 H(+)</text>
        <dbReference type="Rhea" id="RHEA:32359"/>
        <dbReference type="ChEBI" id="CHEBI:15378"/>
        <dbReference type="ChEBI" id="CHEBI:30616"/>
        <dbReference type="ChEBI" id="CHEBI:57733"/>
        <dbReference type="ChEBI" id="CHEBI:203600"/>
        <dbReference type="ChEBI" id="CHEBI:456216"/>
        <dbReference type="EC" id="2.7.1.151"/>
    </reaction>
</comment>
<comment type="catalytic activity">
    <reaction>
        <text>1D-myo-inositol 1,3,4,6-tetrakisphosphate + ATP = 1D-myo-inositol 1,3,4,5,6-pentakisphosphate + ADP + H(+)</text>
        <dbReference type="Rhea" id="RHEA:12717"/>
        <dbReference type="ChEBI" id="CHEBI:15378"/>
        <dbReference type="ChEBI" id="CHEBI:30616"/>
        <dbReference type="ChEBI" id="CHEBI:57660"/>
        <dbReference type="ChEBI" id="CHEBI:57733"/>
        <dbReference type="ChEBI" id="CHEBI:456216"/>
        <dbReference type="EC" id="2.7.1.140"/>
    </reaction>
</comment>
<comment type="biophysicochemical properties">
    <kinetics>
        <KM evidence="3">14.6 uM for Ins(1,4,5)P3</KM>
        <KM evidence="3">15.5 uM for Ins(1,3,4,5)P4</KM>
        <KM evidence="3">31.7 uM for Ins(1,4,5,6)P4</KM>
        <Vmax evidence="3">0.052 umol/min/mg enzyme toward Ins(1,4,5)P3</Vmax>
        <Vmax evidence="3">0.096 umol/min/mg enzyme toward Ins(1,3,4,5)P4</Vmax>
        <Vmax evidence="3">0.116 umol/min/mg enzyme toward Ins(1,4,5,6)P4</Vmax>
    </kinetics>
</comment>
<comment type="subcellular location">
    <subcellularLocation>
        <location evidence="4">Nucleus</location>
    </subcellularLocation>
    <subcellularLocation>
        <location evidence="4">Cell membrane</location>
    </subcellularLocation>
</comment>
<comment type="tissue specificity">
    <text evidence="3 4">Detected in leaves, stems, roots, siliques and flowers. Highly expressed in root tissues, anthers, the stigma, pollen grains and growing pollen tubes.</text>
</comment>
<comment type="developmental stage">
    <text evidence="4">Expression persisted in the stigmatic tissue after fertilization and in siliques during seed maturation.</text>
</comment>
<comment type="induction">
    <text evidence="5">Not induced by auxin.</text>
</comment>
<comment type="PTM">
    <text evidence="1">Phosphorylated.</text>
</comment>
<comment type="miscellaneous">
    <text evidence="1">Does not bind calmodulin.</text>
</comment>
<comment type="similarity">
    <text evidence="6">Belongs to the inositol phosphokinase (IPK) family.</text>
</comment>
<sequence length="286" mass="31946">MQLKVPEHQVAGHIAKDGKPGPLVDDKGRFFKPLQGDSRGEIEVKFYESFSSNTEVPEHIHRYFPVYHGTQAVEGSDGAAMMVLENLLAEYTKPSVMDVKMGSRTWYPDASEEYIQKCLKKDTGTTTVSSGFRISGFEVYDHKESSFWKPERKLLRGLDVDGARLTLRKFVSSNSLSDTGSKPDSAFASSVYGGSHGILTQLLELKTWFENQTLYHFNSCSILMVYENESILKGNDDDARPQVKLVDFAHVLDGNGVIDHNFLGGLCSFINFIREILQSPDESADS</sequence>
<dbReference type="EC" id="2.7.1.140"/>
<dbReference type="EC" id="2.7.1.151"/>
<dbReference type="EMBL" id="AY147935">
    <property type="protein sequence ID" value="AAN63057.1"/>
    <property type="molecule type" value="mRNA"/>
</dbReference>
<dbReference type="EMBL" id="AJ404678">
    <property type="protein sequence ID" value="CAB96043.1"/>
    <property type="molecule type" value="mRNA"/>
</dbReference>
<dbReference type="EMBL" id="AL163912">
    <property type="protein sequence ID" value="CAB87926.1"/>
    <property type="molecule type" value="Genomic_DNA"/>
</dbReference>
<dbReference type="EMBL" id="CP002688">
    <property type="protein sequence ID" value="AED91144.1"/>
    <property type="molecule type" value="Genomic_DNA"/>
</dbReference>
<dbReference type="EMBL" id="CP002688">
    <property type="protein sequence ID" value="AED91145.1"/>
    <property type="molecule type" value="Genomic_DNA"/>
</dbReference>
<dbReference type="EMBL" id="CP002688">
    <property type="protein sequence ID" value="AED91146.1"/>
    <property type="molecule type" value="Genomic_DNA"/>
</dbReference>
<dbReference type="EMBL" id="CP002688">
    <property type="protein sequence ID" value="AED91147.1"/>
    <property type="molecule type" value="Genomic_DNA"/>
</dbReference>
<dbReference type="EMBL" id="AY136378">
    <property type="protein sequence ID" value="AAM97044.1"/>
    <property type="molecule type" value="mRNA"/>
</dbReference>
<dbReference type="EMBL" id="BT000196">
    <property type="protein sequence ID" value="AAN15515.1"/>
    <property type="molecule type" value="mRNA"/>
</dbReference>
<dbReference type="EMBL" id="AY087217">
    <property type="protein sequence ID" value="AAM64773.1"/>
    <property type="molecule type" value="mRNA"/>
</dbReference>
<dbReference type="PIR" id="T49876">
    <property type="entry name" value="T49876"/>
</dbReference>
<dbReference type="RefSeq" id="NP_196354.1">
    <property type="nucleotide sequence ID" value="NM_120819.2"/>
</dbReference>
<dbReference type="RefSeq" id="NP_850786.1">
    <property type="nucleotide sequence ID" value="NM_180455.3"/>
</dbReference>
<dbReference type="RefSeq" id="NP_850787.1">
    <property type="nucleotide sequence ID" value="NM_180456.2"/>
</dbReference>
<dbReference type="RefSeq" id="NP_974748.1">
    <property type="nucleotide sequence ID" value="NM_203019.2"/>
</dbReference>
<dbReference type="PDB" id="4FRF">
    <property type="method" value="X-ray"/>
    <property type="resolution" value="2.90 A"/>
    <property type="chains" value="A/B=16-286"/>
</dbReference>
<dbReference type="PDBsum" id="4FRF"/>
<dbReference type="SMR" id="Q9LY23"/>
<dbReference type="FunCoup" id="Q9LY23">
    <property type="interactions" value="2477"/>
</dbReference>
<dbReference type="STRING" id="3702.Q9LY23"/>
<dbReference type="PaxDb" id="3702-AT5G07370.4"/>
<dbReference type="ProteomicsDB" id="247182"/>
<dbReference type="DNASU" id="830628"/>
<dbReference type="EnsemblPlants" id="AT5G07370.1">
    <property type="protein sequence ID" value="AT5G07370.1"/>
    <property type="gene ID" value="AT5G07370"/>
</dbReference>
<dbReference type="EnsemblPlants" id="AT5G07370.2">
    <property type="protein sequence ID" value="AT5G07370.2"/>
    <property type="gene ID" value="AT5G07370"/>
</dbReference>
<dbReference type="EnsemblPlants" id="AT5G07370.3">
    <property type="protein sequence ID" value="AT5G07370.3"/>
    <property type="gene ID" value="AT5G07370"/>
</dbReference>
<dbReference type="EnsemblPlants" id="AT5G07370.4">
    <property type="protein sequence ID" value="AT5G07370.4"/>
    <property type="gene ID" value="AT5G07370"/>
</dbReference>
<dbReference type="GeneID" id="830628"/>
<dbReference type="Gramene" id="AT5G07370.1">
    <property type="protein sequence ID" value="AT5G07370.1"/>
    <property type="gene ID" value="AT5G07370"/>
</dbReference>
<dbReference type="Gramene" id="AT5G07370.2">
    <property type="protein sequence ID" value="AT5G07370.2"/>
    <property type="gene ID" value="AT5G07370"/>
</dbReference>
<dbReference type="Gramene" id="AT5G07370.3">
    <property type="protein sequence ID" value="AT5G07370.3"/>
    <property type="gene ID" value="AT5G07370"/>
</dbReference>
<dbReference type="Gramene" id="AT5G07370.4">
    <property type="protein sequence ID" value="AT5G07370.4"/>
    <property type="gene ID" value="AT5G07370"/>
</dbReference>
<dbReference type="KEGG" id="ath:AT5G07370"/>
<dbReference type="Araport" id="AT5G07370"/>
<dbReference type="TAIR" id="AT5G07370">
    <property type="gene designation" value="IPK2A"/>
</dbReference>
<dbReference type="eggNOG" id="KOG1620">
    <property type="taxonomic scope" value="Eukaryota"/>
</dbReference>
<dbReference type="HOGENOM" id="CLU_042569_1_0_1"/>
<dbReference type="InParanoid" id="Q9LY23"/>
<dbReference type="OMA" id="AKPCVMD"/>
<dbReference type="PhylomeDB" id="Q9LY23"/>
<dbReference type="BioCyc" id="ARA:AT5G07370-MONOMER"/>
<dbReference type="BioCyc" id="MetaCyc:AT5G07370-MONOMER"/>
<dbReference type="BRENDA" id="2.7.1.151">
    <property type="organism ID" value="399"/>
</dbReference>
<dbReference type="BRENDA" id="2.7.4.21">
    <property type="organism ID" value="399"/>
</dbReference>
<dbReference type="SABIO-RK" id="Q9LY23"/>
<dbReference type="EvolutionaryTrace" id="Q9LY23"/>
<dbReference type="PRO" id="PR:Q9LY23"/>
<dbReference type="Proteomes" id="UP000006548">
    <property type="component" value="Chromosome 5"/>
</dbReference>
<dbReference type="ExpressionAtlas" id="Q9LY23">
    <property type="expression patterns" value="baseline and differential"/>
</dbReference>
<dbReference type="GO" id="GO:0005634">
    <property type="term" value="C:nucleus"/>
    <property type="evidence" value="ECO:0000314"/>
    <property type="project" value="TAIR"/>
</dbReference>
<dbReference type="GO" id="GO:0005886">
    <property type="term" value="C:plasma membrane"/>
    <property type="evidence" value="ECO:0000314"/>
    <property type="project" value="TAIR"/>
</dbReference>
<dbReference type="GO" id="GO:0090406">
    <property type="term" value="C:pollen tube"/>
    <property type="evidence" value="ECO:0000314"/>
    <property type="project" value="TAIR"/>
</dbReference>
<dbReference type="GO" id="GO:0005524">
    <property type="term" value="F:ATP binding"/>
    <property type="evidence" value="ECO:0007669"/>
    <property type="project" value="UniProtKB-KW"/>
</dbReference>
<dbReference type="GO" id="GO:0102732">
    <property type="term" value="F:inositol-1,2,3,4,6-pentakisphosphate 5-kinase activity"/>
    <property type="evidence" value="ECO:0000314"/>
    <property type="project" value="FlyBase"/>
</dbReference>
<dbReference type="GO" id="GO:0047326">
    <property type="term" value="F:inositol-1,3,4,6-tetrakisphosphate 5-kinase activity"/>
    <property type="evidence" value="ECO:0007669"/>
    <property type="project" value="RHEA"/>
</dbReference>
<dbReference type="GO" id="GO:0000824">
    <property type="term" value="F:inositol-1,4,5,6-tetrakisphosphate 3-kinase activity"/>
    <property type="evidence" value="ECO:0000314"/>
    <property type="project" value="TAIR"/>
</dbReference>
<dbReference type="GO" id="GO:0000823">
    <property type="term" value="F:inositol-1,4,5-trisphosphate 6-kinase activity"/>
    <property type="evidence" value="ECO:0000314"/>
    <property type="project" value="TAIR"/>
</dbReference>
<dbReference type="GO" id="GO:0009793">
    <property type="term" value="P:embryo development ending in seed dormancy"/>
    <property type="evidence" value="ECO:0000316"/>
    <property type="project" value="TAIR"/>
</dbReference>
<dbReference type="GO" id="GO:0032958">
    <property type="term" value="P:inositol phosphate biosynthetic process"/>
    <property type="evidence" value="ECO:0007669"/>
    <property type="project" value="InterPro"/>
</dbReference>
<dbReference type="GO" id="GO:0009555">
    <property type="term" value="P:pollen development"/>
    <property type="evidence" value="ECO:0000316"/>
    <property type="project" value="TAIR"/>
</dbReference>
<dbReference type="GO" id="GO:0009846">
    <property type="term" value="P:pollen germination"/>
    <property type="evidence" value="ECO:0000315"/>
    <property type="project" value="TAIR"/>
</dbReference>
<dbReference type="GO" id="GO:0009860">
    <property type="term" value="P:pollen tube growth"/>
    <property type="evidence" value="ECO:0000315"/>
    <property type="project" value="TAIR"/>
</dbReference>
<dbReference type="GO" id="GO:0010183">
    <property type="term" value="P:pollen tube guidance"/>
    <property type="evidence" value="ECO:0000316"/>
    <property type="project" value="TAIR"/>
</dbReference>
<dbReference type="FunFam" id="3.30.470.160:FF:000004">
    <property type="entry name" value="Inositol polyphosphate multikinase alpha"/>
    <property type="match status" value="1"/>
</dbReference>
<dbReference type="Gene3D" id="3.30.470.160">
    <property type="entry name" value="Inositol polyphosphate kinase"/>
    <property type="match status" value="1"/>
</dbReference>
<dbReference type="InterPro" id="IPR005522">
    <property type="entry name" value="IPK"/>
</dbReference>
<dbReference type="InterPro" id="IPR038286">
    <property type="entry name" value="IPK_sf"/>
</dbReference>
<dbReference type="PANTHER" id="PTHR12400">
    <property type="entry name" value="INOSITOL POLYPHOSPHATE KINASE"/>
    <property type="match status" value="1"/>
</dbReference>
<dbReference type="PANTHER" id="PTHR12400:SF101">
    <property type="entry name" value="INOSITOL POLYPHOSPHATE MULTIKINASE ALPHA"/>
    <property type="match status" value="1"/>
</dbReference>
<dbReference type="Pfam" id="PF03770">
    <property type="entry name" value="IPK"/>
    <property type="match status" value="1"/>
</dbReference>
<dbReference type="SUPFAM" id="SSF56104">
    <property type="entry name" value="SAICAR synthase-like"/>
    <property type="match status" value="1"/>
</dbReference>
<name>IPMKA_ARATH</name>
<accession>Q9LY23</accession>
<accession>Q8LBG7</accession>
<accession>Q9LF72</accession>
<organism>
    <name type="scientific">Arabidopsis thaliana</name>
    <name type="common">Mouse-ear cress</name>
    <dbReference type="NCBI Taxonomy" id="3702"/>
    <lineage>
        <taxon>Eukaryota</taxon>
        <taxon>Viridiplantae</taxon>
        <taxon>Streptophyta</taxon>
        <taxon>Embryophyta</taxon>
        <taxon>Tracheophyta</taxon>
        <taxon>Spermatophyta</taxon>
        <taxon>Magnoliopsida</taxon>
        <taxon>eudicotyledons</taxon>
        <taxon>Gunneridae</taxon>
        <taxon>Pentapetalae</taxon>
        <taxon>rosids</taxon>
        <taxon>malvids</taxon>
        <taxon>Brassicales</taxon>
        <taxon>Brassicaceae</taxon>
        <taxon>Camelineae</taxon>
        <taxon>Arabidopsis</taxon>
    </lineage>
</organism>
<reference key="1">
    <citation type="journal article" date="2002" name="J. Biol. Chem.">
        <title>Molecular and biochemical characterization of two plant inositol polyphosphate 6-/3-/5-kinases.</title>
        <authorList>
            <person name="Stevenson-Paulik J."/>
            <person name="Odom A.R."/>
            <person name="York J.D."/>
        </authorList>
    </citation>
    <scope>NUCLEOTIDE SEQUENCE [MRNA]</scope>
    <scope>MUTAGENESIS OF ASP-98</scope>
    <scope>FUNCTION</scope>
    <scope>TISSUE SPECIFICITY</scope>
    <scope>BIOPHYSICOCHEMICAL PROPERTIES</scope>
    <source>
        <strain>cv. Columbia</strain>
    </source>
</reference>
<reference key="2">
    <citation type="journal article" date="2005" name="Plant Physiol.">
        <title>A role of Arabidopsis inositol polyphosphate kinase, AtIPK2alpha, in pollen germination and root growth.</title>
        <authorList>
            <person name="Xu J."/>
            <person name="Brearley C.A."/>
            <person name="Lin W.-H."/>
            <person name="Wang Y."/>
            <person name="Ye R."/>
            <person name="Mueller-Roeber B."/>
            <person name="Xu Z.-H."/>
            <person name="Xue H.-W."/>
        </authorList>
    </citation>
    <scope>NUCLEOTIDE SEQUENCE [MRNA]</scope>
    <scope>FUNCTION</scope>
    <scope>TISSUE SPECIFICITY</scope>
    <scope>DEVELOPMENTAL STAGE</scope>
    <scope>SUBCELLULAR LOCATION</scope>
    <source>
        <strain>cv. Columbia</strain>
    </source>
</reference>
<reference key="3">
    <citation type="journal article" date="2000" name="Nature">
        <title>Sequence and analysis of chromosome 5 of the plant Arabidopsis thaliana.</title>
        <authorList>
            <person name="Tabata S."/>
            <person name="Kaneko T."/>
            <person name="Nakamura Y."/>
            <person name="Kotani H."/>
            <person name="Kato T."/>
            <person name="Asamizu E."/>
            <person name="Miyajima N."/>
            <person name="Sasamoto S."/>
            <person name="Kimura T."/>
            <person name="Hosouchi T."/>
            <person name="Kawashima K."/>
            <person name="Kohara M."/>
            <person name="Matsumoto M."/>
            <person name="Matsuno A."/>
            <person name="Muraki A."/>
            <person name="Nakayama S."/>
            <person name="Nakazaki N."/>
            <person name="Naruo K."/>
            <person name="Okumura S."/>
            <person name="Shinpo S."/>
            <person name="Takeuchi C."/>
            <person name="Wada T."/>
            <person name="Watanabe A."/>
            <person name="Yamada M."/>
            <person name="Yasuda M."/>
            <person name="Sato S."/>
            <person name="de la Bastide M."/>
            <person name="Huang E."/>
            <person name="Spiegel L."/>
            <person name="Gnoj L."/>
            <person name="O'Shaughnessy A."/>
            <person name="Preston R."/>
            <person name="Habermann K."/>
            <person name="Murray J."/>
            <person name="Johnson D."/>
            <person name="Rohlfing T."/>
            <person name="Nelson J."/>
            <person name="Stoneking T."/>
            <person name="Pepin K."/>
            <person name="Spieth J."/>
            <person name="Sekhon M."/>
            <person name="Armstrong J."/>
            <person name="Becker M."/>
            <person name="Belter E."/>
            <person name="Cordum H."/>
            <person name="Cordes M."/>
            <person name="Courtney L."/>
            <person name="Courtney W."/>
            <person name="Dante M."/>
            <person name="Du H."/>
            <person name="Edwards J."/>
            <person name="Fryman J."/>
            <person name="Haakensen B."/>
            <person name="Lamar E."/>
            <person name="Latreille P."/>
            <person name="Leonard S."/>
            <person name="Meyer R."/>
            <person name="Mulvaney E."/>
            <person name="Ozersky P."/>
            <person name="Riley A."/>
            <person name="Strowmatt C."/>
            <person name="Wagner-McPherson C."/>
            <person name="Wollam A."/>
            <person name="Yoakum M."/>
            <person name="Bell M."/>
            <person name="Dedhia N."/>
            <person name="Parnell L."/>
            <person name="Shah R."/>
            <person name="Rodriguez M."/>
            <person name="Hoon See L."/>
            <person name="Vil D."/>
            <person name="Baker J."/>
            <person name="Kirchoff K."/>
            <person name="Toth K."/>
            <person name="King L."/>
            <person name="Bahret A."/>
            <person name="Miller B."/>
            <person name="Marra M.A."/>
            <person name="Martienssen R."/>
            <person name="McCombie W.R."/>
            <person name="Wilson R.K."/>
            <person name="Murphy G."/>
            <person name="Bancroft I."/>
            <person name="Volckaert G."/>
            <person name="Wambutt R."/>
            <person name="Duesterhoeft A."/>
            <person name="Stiekema W."/>
            <person name="Pohl T."/>
            <person name="Entian K.-D."/>
            <person name="Terryn N."/>
            <person name="Hartley N."/>
            <person name="Bent E."/>
            <person name="Johnson S."/>
            <person name="Langham S.-A."/>
            <person name="McCullagh B."/>
            <person name="Robben J."/>
            <person name="Grymonprez B."/>
            <person name="Zimmermann W."/>
            <person name="Ramsperger U."/>
            <person name="Wedler H."/>
            <person name="Balke K."/>
            <person name="Wedler E."/>
            <person name="Peters S."/>
            <person name="van Staveren M."/>
            <person name="Dirkse W."/>
            <person name="Mooijman P."/>
            <person name="Klein Lankhorst R."/>
            <person name="Weitzenegger T."/>
            <person name="Bothe G."/>
            <person name="Rose M."/>
            <person name="Hauf J."/>
            <person name="Berneiser S."/>
            <person name="Hempel S."/>
            <person name="Feldpausch M."/>
            <person name="Lamberth S."/>
            <person name="Villarroel R."/>
            <person name="Gielen J."/>
            <person name="Ardiles W."/>
            <person name="Bents O."/>
            <person name="Lemcke K."/>
            <person name="Kolesov G."/>
            <person name="Mayer K.F.X."/>
            <person name="Rudd S."/>
            <person name="Schoof H."/>
            <person name="Schueller C."/>
            <person name="Zaccaria P."/>
            <person name="Mewes H.-W."/>
            <person name="Bevan M."/>
            <person name="Fransz P.F."/>
        </authorList>
    </citation>
    <scope>NUCLEOTIDE SEQUENCE [LARGE SCALE GENOMIC DNA]</scope>
    <source>
        <strain>cv. Columbia</strain>
    </source>
</reference>
<reference key="4">
    <citation type="journal article" date="2017" name="Plant J.">
        <title>Araport11: a complete reannotation of the Arabidopsis thaliana reference genome.</title>
        <authorList>
            <person name="Cheng C.Y."/>
            <person name="Krishnakumar V."/>
            <person name="Chan A.P."/>
            <person name="Thibaud-Nissen F."/>
            <person name="Schobel S."/>
            <person name="Town C.D."/>
        </authorList>
    </citation>
    <scope>GENOME REANNOTATION</scope>
    <source>
        <strain>cv. Columbia</strain>
    </source>
</reference>
<reference key="5">
    <citation type="journal article" date="2003" name="Science">
        <title>Empirical analysis of transcriptional activity in the Arabidopsis genome.</title>
        <authorList>
            <person name="Yamada K."/>
            <person name="Lim J."/>
            <person name="Dale J.M."/>
            <person name="Chen H."/>
            <person name="Shinn P."/>
            <person name="Palm C.J."/>
            <person name="Southwick A.M."/>
            <person name="Wu H.C."/>
            <person name="Kim C.J."/>
            <person name="Nguyen M."/>
            <person name="Pham P.K."/>
            <person name="Cheuk R.F."/>
            <person name="Karlin-Newmann G."/>
            <person name="Liu S.X."/>
            <person name="Lam B."/>
            <person name="Sakano H."/>
            <person name="Wu T."/>
            <person name="Yu G."/>
            <person name="Miranda M."/>
            <person name="Quach H.L."/>
            <person name="Tripp M."/>
            <person name="Chang C.H."/>
            <person name="Lee J.M."/>
            <person name="Toriumi M.J."/>
            <person name="Chan M.M."/>
            <person name="Tang C.C."/>
            <person name="Onodera C.S."/>
            <person name="Deng J.M."/>
            <person name="Akiyama K."/>
            <person name="Ansari Y."/>
            <person name="Arakawa T."/>
            <person name="Banh J."/>
            <person name="Banno F."/>
            <person name="Bowser L."/>
            <person name="Brooks S.Y."/>
            <person name="Carninci P."/>
            <person name="Chao Q."/>
            <person name="Choy N."/>
            <person name="Enju A."/>
            <person name="Goldsmith A.D."/>
            <person name="Gurjal M."/>
            <person name="Hansen N.F."/>
            <person name="Hayashizaki Y."/>
            <person name="Johnson-Hopson C."/>
            <person name="Hsuan V.W."/>
            <person name="Iida K."/>
            <person name="Karnes M."/>
            <person name="Khan S."/>
            <person name="Koesema E."/>
            <person name="Ishida J."/>
            <person name="Jiang P.X."/>
            <person name="Jones T."/>
            <person name="Kawai J."/>
            <person name="Kamiya A."/>
            <person name="Meyers C."/>
            <person name="Nakajima M."/>
            <person name="Narusaka M."/>
            <person name="Seki M."/>
            <person name="Sakurai T."/>
            <person name="Satou M."/>
            <person name="Tamse R."/>
            <person name="Vaysberg M."/>
            <person name="Wallender E.K."/>
            <person name="Wong C."/>
            <person name="Yamamura Y."/>
            <person name="Yuan S."/>
            <person name="Shinozaki K."/>
            <person name="Davis R.W."/>
            <person name="Theologis A."/>
            <person name="Ecker J.R."/>
        </authorList>
    </citation>
    <scope>NUCLEOTIDE SEQUENCE [LARGE SCALE MRNA]</scope>
    <source>
        <strain>cv. Columbia</strain>
    </source>
</reference>
<reference key="6">
    <citation type="submission" date="2002-03" db="EMBL/GenBank/DDBJ databases">
        <title>Full-length cDNA from Arabidopsis thaliana.</title>
        <authorList>
            <person name="Brover V.V."/>
            <person name="Troukhan M.E."/>
            <person name="Alexandrov N.A."/>
            <person name="Lu Y.-P."/>
            <person name="Flavell R.B."/>
            <person name="Feldmann K.A."/>
        </authorList>
    </citation>
    <scope>NUCLEOTIDE SEQUENCE [LARGE SCALE MRNA]</scope>
</reference>
<reference key="7">
    <citation type="journal article" date="2007" name="Plant Physiol.">
        <title>Arabidopsis inositol polyphosphate 6-/3-kinase (AtIpk2beta) is involved in axillary shoot branching via auxin signaling.</title>
        <authorList>
            <person name="Zhang Z.-B."/>
            <person name="Yang G."/>
            <person name="Arana F."/>
            <person name="Chen Z."/>
            <person name="Li Y."/>
            <person name="Xia H.-J."/>
        </authorList>
    </citation>
    <scope>INDUCTION BY AUXIN</scope>
</reference>
<reference key="8">
    <citation type="journal article" date="2012" name="J. Biol. Chem.">
        <title>Structural studies and protein engineering of inositol phosphate multikinase.</title>
        <authorList>
            <person name="Endo-Streeter S."/>
            <person name="Tsui M.K."/>
            <person name="Odom A.R."/>
            <person name="Block J."/>
            <person name="York J.D."/>
        </authorList>
    </citation>
    <scope>X-RAY CRYSTALLOGRAPHY (2.90 ANGSTROMS) OF 16-286</scope>
</reference>